<proteinExistence type="inferred from homology"/>
<gene>
    <name evidence="1" type="primary">glyQ</name>
    <name type="ordered locus">Dtur_1320</name>
</gene>
<evidence type="ECO:0000255" key="1">
    <source>
        <dbReference type="HAMAP-Rule" id="MF_00254"/>
    </source>
</evidence>
<keyword id="KW-0030">Aminoacyl-tRNA synthetase</keyword>
<keyword id="KW-0067">ATP-binding</keyword>
<keyword id="KW-0963">Cytoplasm</keyword>
<keyword id="KW-0436">Ligase</keyword>
<keyword id="KW-0547">Nucleotide-binding</keyword>
<keyword id="KW-0648">Protein biosynthesis</keyword>
<keyword id="KW-1185">Reference proteome</keyword>
<feature type="chain" id="PRO_1000197184" description="Glycine--tRNA ligase alpha subunit">
    <location>
        <begin position="1"/>
        <end position="299"/>
    </location>
</feature>
<reference key="1">
    <citation type="journal article" date="2016" name="Front. Microbiol.">
        <title>The complete genome sequence of hyperthermophile Dictyoglomus turgidum DSM 6724 reveals a specialized carbohydrate fermentor.</title>
        <authorList>
            <person name="Brumm P.J."/>
            <person name="Gowda K."/>
            <person name="Robb F.T."/>
            <person name="Mead D.A."/>
        </authorList>
    </citation>
    <scope>NUCLEOTIDE SEQUENCE [LARGE SCALE GENOMIC DNA]</scope>
    <source>
        <strain>DSM 6724 / Z-1310</strain>
    </source>
</reference>
<sequence length="299" mass="34990">MLFQEIIFKLNEFWHNQGCIIQQPYDIEVGAGTMNPATFFRVLGPEPWYVAYVEPSRRPTDGRYGENPNRLQHYYQYQVILKPSPADVQEIYIESLKYLGIEIEKHDIRFVEDNWESPTLGAWGIGWEVWLDGMEITQFTYFQQCGGFDLFPVSAEITYGLERIAMYIQGVDDFKAIKWQDNVTYGDVHLQSEVENCIYNFELADVERLRLLFNEYEKEAERLLNQGLTFPAYDYVLKCSHTFNLLDARGAISVVQRSQYISRIRRLAARAAENYLKSREALGFPLLNKAWRKEEARLG</sequence>
<protein>
    <recommendedName>
        <fullName evidence="1">Glycine--tRNA ligase alpha subunit</fullName>
        <ecNumber evidence="1">6.1.1.14</ecNumber>
    </recommendedName>
    <alternativeName>
        <fullName evidence="1">Glycyl-tRNA synthetase alpha subunit</fullName>
        <shortName evidence="1">GlyRS</shortName>
    </alternativeName>
</protein>
<comment type="catalytic activity">
    <reaction evidence="1">
        <text>tRNA(Gly) + glycine + ATP = glycyl-tRNA(Gly) + AMP + diphosphate</text>
        <dbReference type="Rhea" id="RHEA:16013"/>
        <dbReference type="Rhea" id="RHEA-COMP:9664"/>
        <dbReference type="Rhea" id="RHEA-COMP:9683"/>
        <dbReference type="ChEBI" id="CHEBI:30616"/>
        <dbReference type="ChEBI" id="CHEBI:33019"/>
        <dbReference type="ChEBI" id="CHEBI:57305"/>
        <dbReference type="ChEBI" id="CHEBI:78442"/>
        <dbReference type="ChEBI" id="CHEBI:78522"/>
        <dbReference type="ChEBI" id="CHEBI:456215"/>
        <dbReference type="EC" id="6.1.1.14"/>
    </reaction>
</comment>
<comment type="subunit">
    <text evidence="1">Tetramer of two alpha and two beta subunits.</text>
</comment>
<comment type="subcellular location">
    <subcellularLocation>
        <location evidence="1">Cytoplasm</location>
    </subcellularLocation>
</comment>
<comment type="similarity">
    <text evidence="1">Belongs to the class-II aminoacyl-tRNA synthetase family.</text>
</comment>
<dbReference type="EC" id="6.1.1.14" evidence="1"/>
<dbReference type="EMBL" id="CP001251">
    <property type="protein sequence ID" value="ACK42594.1"/>
    <property type="molecule type" value="Genomic_DNA"/>
</dbReference>
<dbReference type="RefSeq" id="WP_012583676.1">
    <property type="nucleotide sequence ID" value="NC_011661.1"/>
</dbReference>
<dbReference type="RefSeq" id="YP_002353208.1">
    <property type="nucleotide sequence ID" value="NC_011661.1"/>
</dbReference>
<dbReference type="SMR" id="B8E0E9"/>
<dbReference type="FunCoup" id="B8E0E9">
    <property type="interactions" value="185"/>
</dbReference>
<dbReference type="STRING" id="515635.Dtur_1320"/>
<dbReference type="EnsemblBacteria" id="ACK42594">
    <property type="protein sequence ID" value="ACK42594"/>
    <property type="gene ID" value="Dtur_1320"/>
</dbReference>
<dbReference type="KEGG" id="dtu:Dtur_1320"/>
<dbReference type="PATRIC" id="fig|515635.4.peg.1365"/>
<dbReference type="eggNOG" id="COG0752">
    <property type="taxonomic scope" value="Bacteria"/>
</dbReference>
<dbReference type="HOGENOM" id="CLU_057066_1_0_0"/>
<dbReference type="InParanoid" id="B8E0E9"/>
<dbReference type="OrthoDB" id="9775440at2"/>
<dbReference type="Proteomes" id="UP000007719">
    <property type="component" value="Chromosome"/>
</dbReference>
<dbReference type="GO" id="GO:0005737">
    <property type="term" value="C:cytoplasm"/>
    <property type="evidence" value="ECO:0007669"/>
    <property type="project" value="UniProtKB-SubCell"/>
</dbReference>
<dbReference type="GO" id="GO:0005524">
    <property type="term" value="F:ATP binding"/>
    <property type="evidence" value="ECO:0007669"/>
    <property type="project" value="UniProtKB-UniRule"/>
</dbReference>
<dbReference type="GO" id="GO:0004820">
    <property type="term" value="F:glycine-tRNA ligase activity"/>
    <property type="evidence" value="ECO:0007669"/>
    <property type="project" value="UniProtKB-UniRule"/>
</dbReference>
<dbReference type="GO" id="GO:0006426">
    <property type="term" value="P:glycyl-tRNA aminoacylation"/>
    <property type="evidence" value="ECO:0007669"/>
    <property type="project" value="UniProtKB-UniRule"/>
</dbReference>
<dbReference type="CDD" id="cd00733">
    <property type="entry name" value="GlyRS_alpha_core"/>
    <property type="match status" value="1"/>
</dbReference>
<dbReference type="FunFam" id="3.30.930.10:FF:000006">
    <property type="entry name" value="Glycine--tRNA ligase alpha subunit"/>
    <property type="match status" value="1"/>
</dbReference>
<dbReference type="Gene3D" id="3.30.930.10">
    <property type="entry name" value="Bira Bifunctional Protein, Domain 2"/>
    <property type="match status" value="1"/>
</dbReference>
<dbReference type="Gene3D" id="1.20.58.180">
    <property type="entry name" value="Class II aaRS and biotin synthetases, domain 2"/>
    <property type="match status" value="1"/>
</dbReference>
<dbReference type="HAMAP" id="MF_00254">
    <property type="entry name" value="Gly_tRNA_synth_alpha"/>
    <property type="match status" value="1"/>
</dbReference>
<dbReference type="InterPro" id="IPR045864">
    <property type="entry name" value="aa-tRNA-synth_II/BPL/LPL"/>
</dbReference>
<dbReference type="InterPro" id="IPR006194">
    <property type="entry name" value="Gly-tRNA-synth_heterodimer"/>
</dbReference>
<dbReference type="InterPro" id="IPR002310">
    <property type="entry name" value="Gly-tRNA_ligase_asu"/>
</dbReference>
<dbReference type="NCBIfam" id="TIGR00388">
    <property type="entry name" value="glyQ"/>
    <property type="match status" value="1"/>
</dbReference>
<dbReference type="NCBIfam" id="NF006827">
    <property type="entry name" value="PRK09348.1"/>
    <property type="match status" value="1"/>
</dbReference>
<dbReference type="PANTHER" id="PTHR30075:SF2">
    <property type="entry name" value="GLYCINE--TRNA LIGASE, CHLOROPLASTIC_MITOCHONDRIAL 2"/>
    <property type="match status" value="1"/>
</dbReference>
<dbReference type="PANTHER" id="PTHR30075">
    <property type="entry name" value="GLYCYL-TRNA SYNTHETASE"/>
    <property type="match status" value="1"/>
</dbReference>
<dbReference type="Pfam" id="PF02091">
    <property type="entry name" value="tRNA-synt_2e"/>
    <property type="match status" value="1"/>
</dbReference>
<dbReference type="PRINTS" id="PR01044">
    <property type="entry name" value="TRNASYNTHGA"/>
</dbReference>
<dbReference type="SUPFAM" id="SSF55681">
    <property type="entry name" value="Class II aaRS and biotin synthetases"/>
    <property type="match status" value="1"/>
</dbReference>
<dbReference type="PROSITE" id="PS50861">
    <property type="entry name" value="AA_TRNA_LIGASE_II_GLYAB"/>
    <property type="match status" value="1"/>
</dbReference>
<name>SYGA_DICTD</name>
<organism>
    <name type="scientific">Dictyoglomus turgidum (strain DSM 6724 / Z-1310)</name>
    <dbReference type="NCBI Taxonomy" id="515635"/>
    <lineage>
        <taxon>Bacteria</taxon>
        <taxon>Pseudomonadati</taxon>
        <taxon>Dictyoglomota</taxon>
        <taxon>Dictyoglomia</taxon>
        <taxon>Dictyoglomales</taxon>
        <taxon>Dictyoglomaceae</taxon>
        <taxon>Dictyoglomus</taxon>
    </lineage>
</organism>
<accession>B8E0E9</accession>